<feature type="chain" id="PRO_1000185717" description="Polyribonucleotide nucleotidyltransferase">
    <location>
        <begin position="1"/>
        <end position="721"/>
    </location>
</feature>
<feature type="domain" description="KH" evidence="1">
    <location>
        <begin position="562"/>
        <end position="621"/>
    </location>
</feature>
<feature type="domain" description="S1 motif" evidence="1">
    <location>
        <begin position="631"/>
        <end position="699"/>
    </location>
</feature>
<feature type="region of interest" description="Disordered" evidence="2">
    <location>
        <begin position="699"/>
        <end position="721"/>
    </location>
</feature>
<feature type="binding site" evidence="1">
    <location>
        <position position="495"/>
    </location>
    <ligand>
        <name>Mg(2+)</name>
        <dbReference type="ChEBI" id="CHEBI:18420"/>
    </ligand>
</feature>
<feature type="binding site" evidence="1">
    <location>
        <position position="501"/>
    </location>
    <ligand>
        <name>Mg(2+)</name>
        <dbReference type="ChEBI" id="CHEBI:18420"/>
    </ligand>
</feature>
<dbReference type="EC" id="2.7.7.8" evidence="1"/>
<dbReference type="EMBL" id="CP001359">
    <property type="protein sequence ID" value="ACL64579.1"/>
    <property type="molecule type" value="Genomic_DNA"/>
</dbReference>
<dbReference type="RefSeq" id="WP_012632560.1">
    <property type="nucleotide sequence ID" value="NC_011891.1"/>
</dbReference>
<dbReference type="SMR" id="B8JFZ1"/>
<dbReference type="KEGG" id="acp:A2cp1_1235"/>
<dbReference type="HOGENOM" id="CLU_004217_2_2_7"/>
<dbReference type="Proteomes" id="UP000007089">
    <property type="component" value="Chromosome"/>
</dbReference>
<dbReference type="GO" id="GO:0005829">
    <property type="term" value="C:cytosol"/>
    <property type="evidence" value="ECO:0007669"/>
    <property type="project" value="TreeGrafter"/>
</dbReference>
<dbReference type="GO" id="GO:0000175">
    <property type="term" value="F:3'-5'-RNA exonuclease activity"/>
    <property type="evidence" value="ECO:0007669"/>
    <property type="project" value="TreeGrafter"/>
</dbReference>
<dbReference type="GO" id="GO:0000287">
    <property type="term" value="F:magnesium ion binding"/>
    <property type="evidence" value="ECO:0007669"/>
    <property type="project" value="UniProtKB-UniRule"/>
</dbReference>
<dbReference type="GO" id="GO:0004654">
    <property type="term" value="F:polyribonucleotide nucleotidyltransferase activity"/>
    <property type="evidence" value="ECO:0007669"/>
    <property type="project" value="UniProtKB-UniRule"/>
</dbReference>
<dbReference type="GO" id="GO:0003723">
    <property type="term" value="F:RNA binding"/>
    <property type="evidence" value="ECO:0007669"/>
    <property type="project" value="UniProtKB-UniRule"/>
</dbReference>
<dbReference type="GO" id="GO:0006402">
    <property type="term" value="P:mRNA catabolic process"/>
    <property type="evidence" value="ECO:0007669"/>
    <property type="project" value="UniProtKB-UniRule"/>
</dbReference>
<dbReference type="GO" id="GO:0006396">
    <property type="term" value="P:RNA processing"/>
    <property type="evidence" value="ECO:0007669"/>
    <property type="project" value="InterPro"/>
</dbReference>
<dbReference type="CDD" id="cd02393">
    <property type="entry name" value="KH-I_PNPase"/>
    <property type="match status" value="1"/>
</dbReference>
<dbReference type="CDD" id="cd11363">
    <property type="entry name" value="RNase_PH_PNPase_1"/>
    <property type="match status" value="1"/>
</dbReference>
<dbReference type="CDD" id="cd11364">
    <property type="entry name" value="RNase_PH_PNPase_2"/>
    <property type="match status" value="1"/>
</dbReference>
<dbReference type="CDD" id="cd04472">
    <property type="entry name" value="S1_PNPase"/>
    <property type="match status" value="1"/>
</dbReference>
<dbReference type="FunFam" id="2.40.50.140:FF:000023">
    <property type="entry name" value="Polyribonucleotide nucleotidyltransferase"/>
    <property type="match status" value="1"/>
</dbReference>
<dbReference type="FunFam" id="3.30.1370.10:FF:000001">
    <property type="entry name" value="Polyribonucleotide nucleotidyltransferase"/>
    <property type="match status" value="1"/>
</dbReference>
<dbReference type="FunFam" id="3.30.230.70:FF:000001">
    <property type="entry name" value="Polyribonucleotide nucleotidyltransferase"/>
    <property type="match status" value="1"/>
</dbReference>
<dbReference type="FunFam" id="3.30.230.70:FF:000002">
    <property type="entry name" value="Polyribonucleotide nucleotidyltransferase"/>
    <property type="match status" value="1"/>
</dbReference>
<dbReference type="Gene3D" id="3.30.230.70">
    <property type="entry name" value="GHMP Kinase, N-terminal domain"/>
    <property type="match status" value="2"/>
</dbReference>
<dbReference type="Gene3D" id="3.30.1370.10">
    <property type="entry name" value="K Homology domain, type 1"/>
    <property type="match status" value="1"/>
</dbReference>
<dbReference type="Gene3D" id="2.40.50.140">
    <property type="entry name" value="Nucleic acid-binding proteins"/>
    <property type="match status" value="1"/>
</dbReference>
<dbReference type="HAMAP" id="MF_01595">
    <property type="entry name" value="PNPase"/>
    <property type="match status" value="1"/>
</dbReference>
<dbReference type="InterPro" id="IPR001247">
    <property type="entry name" value="ExoRNase_PH_dom1"/>
</dbReference>
<dbReference type="InterPro" id="IPR015847">
    <property type="entry name" value="ExoRNase_PH_dom2"/>
</dbReference>
<dbReference type="InterPro" id="IPR036345">
    <property type="entry name" value="ExoRNase_PH_dom2_sf"/>
</dbReference>
<dbReference type="InterPro" id="IPR004087">
    <property type="entry name" value="KH_dom"/>
</dbReference>
<dbReference type="InterPro" id="IPR004088">
    <property type="entry name" value="KH_dom_type_1"/>
</dbReference>
<dbReference type="InterPro" id="IPR036612">
    <property type="entry name" value="KH_dom_type_1_sf"/>
</dbReference>
<dbReference type="InterPro" id="IPR012340">
    <property type="entry name" value="NA-bd_OB-fold"/>
</dbReference>
<dbReference type="InterPro" id="IPR012162">
    <property type="entry name" value="PNPase"/>
</dbReference>
<dbReference type="InterPro" id="IPR027408">
    <property type="entry name" value="PNPase/RNase_PH_dom_sf"/>
</dbReference>
<dbReference type="InterPro" id="IPR015848">
    <property type="entry name" value="PNPase_PH_RNA-bd_bac/org-type"/>
</dbReference>
<dbReference type="InterPro" id="IPR036456">
    <property type="entry name" value="PNPase_PH_RNA-bd_sf"/>
</dbReference>
<dbReference type="InterPro" id="IPR020568">
    <property type="entry name" value="Ribosomal_Su5_D2-typ_SF"/>
</dbReference>
<dbReference type="InterPro" id="IPR003029">
    <property type="entry name" value="S1_domain"/>
</dbReference>
<dbReference type="NCBIfam" id="TIGR03591">
    <property type="entry name" value="polynuc_phos"/>
    <property type="match status" value="1"/>
</dbReference>
<dbReference type="NCBIfam" id="NF008805">
    <property type="entry name" value="PRK11824.1"/>
    <property type="match status" value="1"/>
</dbReference>
<dbReference type="PANTHER" id="PTHR11252">
    <property type="entry name" value="POLYRIBONUCLEOTIDE NUCLEOTIDYLTRANSFERASE"/>
    <property type="match status" value="1"/>
</dbReference>
<dbReference type="PANTHER" id="PTHR11252:SF0">
    <property type="entry name" value="POLYRIBONUCLEOTIDE NUCLEOTIDYLTRANSFERASE 1, MITOCHONDRIAL"/>
    <property type="match status" value="1"/>
</dbReference>
<dbReference type="Pfam" id="PF00013">
    <property type="entry name" value="KH_1"/>
    <property type="match status" value="1"/>
</dbReference>
<dbReference type="Pfam" id="PF03726">
    <property type="entry name" value="PNPase"/>
    <property type="match status" value="1"/>
</dbReference>
<dbReference type="Pfam" id="PF01138">
    <property type="entry name" value="RNase_PH"/>
    <property type="match status" value="2"/>
</dbReference>
<dbReference type="Pfam" id="PF03725">
    <property type="entry name" value="RNase_PH_C"/>
    <property type="match status" value="2"/>
</dbReference>
<dbReference type="Pfam" id="PF00575">
    <property type="entry name" value="S1"/>
    <property type="match status" value="1"/>
</dbReference>
<dbReference type="PIRSF" id="PIRSF005499">
    <property type="entry name" value="PNPase"/>
    <property type="match status" value="1"/>
</dbReference>
<dbReference type="SMART" id="SM00322">
    <property type="entry name" value="KH"/>
    <property type="match status" value="1"/>
</dbReference>
<dbReference type="SMART" id="SM00316">
    <property type="entry name" value="S1"/>
    <property type="match status" value="1"/>
</dbReference>
<dbReference type="SUPFAM" id="SSF54791">
    <property type="entry name" value="Eukaryotic type KH-domain (KH-domain type I)"/>
    <property type="match status" value="1"/>
</dbReference>
<dbReference type="SUPFAM" id="SSF50249">
    <property type="entry name" value="Nucleic acid-binding proteins"/>
    <property type="match status" value="1"/>
</dbReference>
<dbReference type="SUPFAM" id="SSF46915">
    <property type="entry name" value="Polynucleotide phosphorylase/guanosine pentaphosphate synthase (PNPase/GPSI), domain 3"/>
    <property type="match status" value="1"/>
</dbReference>
<dbReference type="SUPFAM" id="SSF55666">
    <property type="entry name" value="Ribonuclease PH domain 2-like"/>
    <property type="match status" value="2"/>
</dbReference>
<dbReference type="SUPFAM" id="SSF54211">
    <property type="entry name" value="Ribosomal protein S5 domain 2-like"/>
    <property type="match status" value="2"/>
</dbReference>
<dbReference type="PROSITE" id="PS50084">
    <property type="entry name" value="KH_TYPE_1"/>
    <property type="match status" value="1"/>
</dbReference>
<dbReference type="PROSITE" id="PS50126">
    <property type="entry name" value="S1"/>
    <property type="match status" value="1"/>
</dbReference>
<evidence type="ECO:0000255" key="1">
    <source>
        <dbReference type="HAMAP-Rule" id="MF_01595"/>
    </source>
</evidence>
<evidence type="ECO:0000256" key="2">
    <source>
        <dbReference type="SAM" id="MobiDB-lite"/>
    </source>
</evidence>
<gene>
    <name evidence="1" type="primary">pnp</name>
    <name type="ordered locus">A2cp1_1235</name>
</gene>
<sequence length="721" mass="77859">MTPIQKTATVGGKDILLETGKVAKQAHGSVWVRLGDSIVLVTAVSAAEKKEGIDFFPLTVDYQEKLFAAGRVPGSFFRREGRPTEKETLTSRLVDRSCRPLFAEGYSNETQVIATVISFDQENDTDVLALTGASAALHISDIPFGGPIAGVRVARVGGQLVANPTLAQRAEADLDVVMAASRDAIVMVEGGAQEVSEAVMIEALLFGQAAVQPLLDAQDALRAATGNKARRAFEPPKNDVELRAKVKALTWEKVKEAYGRNEKHDRYGRLSEIKKELLQALKDEAAGDAAKLATIALREKEIKGYYEDVKYDYMRKMITDERRRIGGRGMADIRKITCEVGLLPRVHGSSLFTRGETQALVATTLGTAEDEQRVEMLTGMVFKKFMLHYNFPPFSVGEVKFLRSPGRREIGHGALAERALRAVMPPEDQFPYTVRVVSDIMESNGSSSMASVCGGCLSLMDAGVPIKAPVAGIAMGLIKEGEKIAILSDILGDEDHLGDMDFKVCGTAAGITSIQMDIKIGGVTRDILEQALAQAAEGRKHILGEMAKALSAPRGSISAYAPRITTIKIRPERIKDIIGPGGKTIKDITARTGTSINIEDDGSVSIASPNQDKVEEAIKMIRGLTQEAEVGRIYLGTVRKIAEFGAFVEIFPGTDGLIHISELSDKRVKSVSDVLSEGEEVMVKVISVDRSGKIRLSRKEALADSAKKSEGTEPPKGEPAK</sequence>
<reference key="1">
    <citation type="submission" date="2009-01" db="EMBL/GenBank/DDBJ databases">
        <title>Complete sequence of Anaeromyxobacter dehalogenans 2CP-1.</title>
        <authorList>
            <person name="Lucas S."/>
            <person name="Copeland A."/>
            <person name="Lapidus A."/>
            <person name="Glavina del Rio T."/>
            <person name="Dalin E."/>
            <person name="Tice H."/>
            <person name="Bruce D."/>
            <person name="Goodwin L."/>
            <person name="Pitluck S."/>
            <person name="Saunders E."/>
            <person name="Brettin T."/>
            <person name="Detter J.C."/>
            <person name="Han C."/>
            <person name="Larimer F."/>
            <person name="Land M."/>
            <person name="Hauser L."/>
            <person name="Kyrpides N."/>
            <person name="Ovchinnikova G."/>
            <person name="Beliaev A.S."/>
            <person name="Richardson P."/>
        </authorList>
    </citation>
    <scope>NUCLEOTIDE SEQUENCE [LARGE SCALE GENOMIC DNA]</scope>
    <source>
        <strain>2CP-1 / ATCC BAA-258</strain>
    </source>
</reference>
<keyword id="KW-0963">Cytoplasm</keyword>
<keyword id="KW-0460">Magnesium</keyword>
<keyword id="KW-0479">Metal-binding</keyword>
<keyword id="KW-0548">Nucleotidyltransferase</keyword>
<keyword id="KW-0694">RNA-binding</keyword>
<keyword id="KW-0808">Transferase</keyword>
<accession>B8JFZ1</accession>
<protein>
    <recommendedName>
        <fullName evidence="1">Polyribonucleotide nucleotidyltransferase</fullName>
        <ecNumber evidence="1">2.7.7.8</ecNumber>
    </recommendedName>
    <alternativeName>
        <fullName evidence="1">Polynucleotide phosphorylase</fullName>
        <shortName evidence="1">PNPase</shortName>
    </alternativeName>
</protein>
<organism>
    <name type="scientific">Anaeromyxobacter dehalogenans (strain 2CP-1 / ATCC BAA-258)</name>
    <dbReference type="NCBI Taxonomy" id="455488"/>
    <lineage>
        <taxon>Bacteria</taxon>
        <taxon>Pseudomonadati</taxon>
        <taxon>Myxococcota</taxon>
        <taxon>Myxococcia</taxon>
        <taxon>Myxococcales</taxon>
        <taxon>Cystobacterineae</taxon>
        <taxon>Anaeromyxobacteraceae</taxon>
        <taxon>Anaeromyxobacter</taxon>
    </lineage>
</organism>
<name>PNP_ANAD2</name>
<proteinExistence type="inferred from homology"/>
<comment type="function">
    <text evidence="1">Involved in mRNA degradation. Catalyzes the phosphorolysis of single-stranded polyribonucleotides processively in the 3'- to 5'-direction.</text>
</comment>
<comment type="catalytic activity">
    <reaction evidence="1">
        <text>RNA(n+1) + phosphate = RNA(n) + a ribonucleoside 5'-diphosphate</text>
        <dbReference type="Rhea" id="RHEA:22096"/>
        <dbReference type="Rhea" id="RHEA-COMP:14527"/>
        <dbReference type="Rhea" id="RHEA-COMP:17342"/>
        <dbReference type="ChEBI" id="CHEBI:43474"/>
        <dbReference type="ChEBI" id="CHEBI:57930"/>
        <dbReference type="ChEBI" id="CHEBI:140395"/>
        <dbReference type="EC" id="2.7.7.8"/>
    </reaction>
</comment>
<comment type="cofactor">
    <cofactor evidence="1">
        <name>Mg(2+)</name>
        <dbReference type="ChEBI" id="CHEBI:18420"/>
    </cofactor>
</comment>
<comment type="subcellular location">
    <subcellularLocation>
        <location evidence="1">Cytoplasm</location>
    </subcellularLocation>
</comment>
<comment type="similarity">
    <text evidence="1">Belongs to the polyribonucleotide nucleotidyltransferase family.</text>
</comment>